<gene>
    <name evidence="1" type="primary">rpmH</name>
    <name type="ordered locus">YPDSF_3935</name>
</gene>
<protein>
    <recommendedName>
        <fullName evidence="1">Large ribosomal subunit protein bL34</fullName>
    </recommendedName>
    <alternativeName>
        <fullName evidence="3">50S ribosomal protein L34</fullName>
    </alternativeName>
</protein>
<dbReference type="EMBL" id="CP000668">
    <property type="protein sequence ID" value="ABP42276.1"/>
    <property type="molecule type" value="Genomic_DNA"/>
</dbReference>
<dbReference type="RefSeq" id="WP_002220736.1">
    <property type="nucleotide sequence ID" value="NZ_CP009715.1"/>
</dbReference>
<dbReference type="SMR" id="A4TSL4"/>
<dbReference type="GeneID" id="97458397"/>
<dbReference type="KEGG" id="ypp:YPDSF_3935"/>
<dbReference type="PATRIC" id="fig|386656.14.peg.580"/>
<dbReference type="GO" id="GO:1990904">
    <property type="term" value="C:ribonucleoprotein complex"/>
    <property type="evidence" value="ECO:0007669"/>
    <property type="project" value="UniProtKB-KW"/>
</dbReference>
<dbReference type="GO" id="GO:0005840">
    <property type="term" value="C:ribosome"/>
    <property type="evidence" value="ECO:0007669"/>
    <property type="project" value="UniProtKB-KW"/>
</dbReference>
<dbReference type="GO" id="GO:0003735">
    <property type="term" value="F:structural constituent of ribosome"/>
    <property type="evidence" value="ECO:0007669"/>
    <property type="project" value="InterPro"/>
</dbReference>
<dbReference type="GO" id="GO:0006412">
    <property type="term" value="P:translation"/>
    <property type="evidence" value="ECO:0007669"/>
    <property type="project" value="UniProtKB-UniRule"/>
</dbReference>
<dbReference type="FunFam" id="1.10.287.3980:FF:000001">
    <property type="entry name" value="Mitochondrial ribosomal protein L34"/>
    <property type="match status" value="1"/>
</dbReference>
<dbReference type="Gene3D" id="1.10.287.3980">
    <property type="match status" value="1"/>
</dbReference>
<dbReference type="HAMAP" id="MF_00391">
    <property type="entry name" value="Ribosomal_bL34"/>
    <property type="match status" value="1"/>
</dbReference>
<dbReference type="InterPro" id="IPR000271">
    <property type="entry name" value="Ribosomal_bL34"/>
</dbReference>
<dbReference type="InterPro" id="IPR020939">
    <property type="entry name" value="Ribosomal_bL34_CS"/>
</dbReference>
<dbReference type="NCBIfam" id="TIGR01030">
    <property type="entry name" value="rpmH_bact"/>
    <property type="match status" value="1"/>
</dbReference>
<dbReference type="PANTHER" id="PTHR14503:SF4">
    <property type="entry name" value="LARGE RIBOSOMAL SUBUNIT PROTEIN BL34M"/>
    <property type="match status" value="1"/>
</dbReference>
<dbReference type="PANTHER" id="PTHR14503">
    <property type="entry name" value="MITOCHONDRIAL RIBOSOMAL PROTEIN 34 FAMILY MEMBER"/>
    <property type="match status" value="1"/>
</dbReference>
<dbReference type="Pfam" id="PF00468">
    <property type="entry name" value="Ribosomal_L34"/>
    <property type="match status" value="1"/>
</dbReference>
<dbReference type="PROSITE" id="PS00784">
    <property type="entry name" value="RIBOSOMAL_L34"/>
    <property type="match status" value="1"/>
</dbReference>
<organism>
    <name type="scientific">Yersinia pestis (strain Pestoides F)</name>
    <dbReference type="NCBI Taxonomy" id="386656"/>
    <lineage>
        <taxon>Bacteria</taxon>
        <taxon>Pseudomonadati</taxon>
        <taxon>Pseudomonadota</taxon>
        <taxon>Gammaproteobacteria</taxon>
        <taxon>Enterobacterales</taxon>
        <taxon>Yersiniaceae</taxon>
        <taxon>Yersinia</taxon>
    </lineage>
</organism>
<reference key="1">
    <citation type="submission" date="2007-02" db="EMBL/GenBank/DDBJ databases">
        <title>Complete sequence of chromosome of Yersinia pestis Pestoides F.</title>
        <authorList>
            <consortium name="US DOE Joint Genome Institute"/>
            <person name="Copeland A."/>
            <person name="Lucas S."/>
            <person name="Lapidus A."/>
            <person name="Barry K."/>
            <person name="Detter J.C."/>
            <person name="Glavina del Rio T."/>
            <person name="Hammon N."/>
            <person name="Israni S."/>
            <person name="Dalin E."/>
            <person name="Tice H."/>
            <person name="Pitluck S."/>
            <person name="Di Bartolo G."/>
            <person name="Chain P."/>
            <person name="Malfatti S."/>
            <person name="Shin M."/>
            <person name="Vergez L."/>
            <person name="Schmutz J."/>
            <person name="Larimer F."/>
            <person name="Land M."/>
            <person name="Hauser L."/>
            <person name="Worsham P."/>
            <person name="Chu M."/>
            <person name="Bearden S."/>
            <person name="Garcia E."/>
            <person name="Richardson P."/>
        </authorList>
    </citation>
    <scope>NUCLEOTIDE SEQUENCE [LARGE SCALE GENOMIC DNA]</scope>
    <source>
        <strain>Pestoides F</strain>
    </source>
</reference>
<proteinExistence type="inferred from homology"/>
<evidence type="ECO:0000255" key="1">
    <source>
        <dbReference type="HAMAP-Rule" id="MF_00391"/>
    </source>
</evidence>
<evidence type="ECO:0000256" key="2">
    <source>
        <dbReference type="SAM" id="MobiDB-lite"/>
    </source>
</evidence>
<evidence type="ECO:0000305" key="3"/>
<keyword id="KW-0687">Ribonucleoprotein</keyword>
<keyword id="KW-0689">Ribosomal protein</keyword>
<accession>A4TSL4</accession>
<feature type="chain" id="PRO_1000013498" description="Large ribosomal subunit protein bL34">
    <location>
        <begin position="1"/>
        <end position="46"/>
    </location>
</feature>
<feature type="region of interest" description="Disordered" evidence="2">
    <location>
        <begin position="26"/>
        <end position="46"/>
    </location>
</feature>
<feature type="compositionally biased region" description="Basic residues" evidence="2">
    <location>
        <begin position="31"/>
        <end position="40"/>
    </location>
</feature>
<comment type="similarity">
    <text evidence="1">Belongs to the bacterial ribosomal protein bL34 family.</text>
</comment>
<name>RL34_YERPP</name>
<sequence length="46" mass="5426">MKRTFQPSVLKRNRSHGFRARMATKNGRQVLARRRAKSRSRLTVSK</sequence>